<dbReference type="EC" id="2.8.1.6" evidence="1"/>
<dbReference type="EMBL" id="CU928164">
    <property type="protein sequence ID" value="CAR16888.1"/>
    <property type="molecule type" value="Genomic_DNA"/>
</dbReference>
<dbReference type="RefSeq" id="WP_000951213.1">
    <property type="nucleotide sequence ID" value="NC_011750.1"/>
</dbReference>
<dbReference type="RefSeq" id="YP_002406776.1">
    <property type="nucleotide sequence ID" value="NC_011750.1"/>
</dbReference>
<dbReference type="SMR" id="B7NNK5"/>
<dbReference type="STRING" id="585057.ECIAI39_0751"/>
<dbReference type="GeneID" id="93776655"/>
<dbReference type="KEGG" id="ect:ECIAI39_0751"/>
<dbReference type="PATRIC" id="fig|585057.6.peg.794"/>
<dbReference type="HOGENOM" id="CLU_033172_1_2_6"/>
<dbReference type="UniPathway" id="UPA00078">
    <property type="reaction ID" value="UER00162"/>
</dbReference>
<dbReference type="Proteomes" id="UP000000749">
    <property type="component" value="Chromosome"/>
</dbReference>
<dbReference type="GO" id="GO:0051537">
    <property type="term" value="F:2 iron, 2 sulfur cluster binding"/>
    <property type="evidence" value="ECO:0007669"/>
    <property type="project" value="UniProtKB-KW"/>
</dbReference>
<dbReference type="GO" id="GO:0051539">
    <property type="term" value="F:4 iron, 4 sulfur cluster binding"/>
    <property type="evidence" value="ECO:0007669"/>
    <property type="project" value="UniProtKB-KW"/>
</dbReference>
<dbReference type="GO" id="GO:0004076">
    <property type="term" value="F:biotin synthase activity"/>
    <property type="evidence" value="ECO:0007669"/>
    <property type="project" value="UniProtKB-UniRule"/>
</dbReference>
<dbReference type="GO" id="GO:0005506">
    <property type="term" value="F:iron ion binding"/>
    <property type="evidence" value="ECO:0007669"/>
    <property type="project" value="UniProtKB-UniRule"/>
</dbReference>
<dbReference type="GO" id="GO:0009102">
    <property type="term" value="P:biotin biosynthetic process"/>
    <property type="evidence" value="ECO:0007669"/>
    <property type="project" value="UniProtKB-UniRule"/>
</dbReference>
<dbReference type="CDD" id="cd01335">
    <property type="entry name" value="Radical_SAM"/>
    <property type="match status" value="1"/>
</dbReference>
<dbReference type="FunFam" id="3.20.20.70:FF:000011">
    <property type="entry name" value="Biotin synthase"/>
    <property type="match status" value="1"/>
</dbReference>
<dbReference type="Gene3D" id="3.20.20.70">
    <property type="entry name" value="Aldolase class I"/>
    <property type="match status" value="1"/>
</dbReference>
<dbReference type="HAMAP" id="MF_01694">
    <property type="entry name" value="BioB"/>
    <property type="match status" value="1"/>
</dbReference>
<dbReference type="InterPro" id="IPR013785">
    <property type="entry name" value="Aldolase_TIM"/>
</dbReference>
<dbReference type="InterPro" id="IPR010722">
    <property type="entry name" value="BATS_dom"/>
</dbReference>
<dbReference type="InterPro" id="IPR002684">
    <property type="entry name" value="Biotin_synth/BioAB"/>
</dbReference>
<dbReference type="InterPro" id="IPR024177">
    <property type="entry name" value="Biotin_synthase"/>
</dbReference>
<dbReference type="InterPro" id="IPR006638">
    <property type="entry name" value="Elp3/MiaA/NifB-like_rSAM"/>
</dbReference>
<dbReference type="InterPro" id="IPR007197">
    <property type="entry name" value="rSAM"/>
</dbReference>
<dbReference type="NCBIfam" id="TIGR00433">
    <property type="entry name" value="bioB"/>
    <property type="match status" value="1"/>
</dbReference>
<dbReference type="PANTHER" id="PTHR22976">
    <property type="entry name" value="BIOTIN SYNTHASE"/>
    <property type="match status" value="1"/>
</dbReference>
<dbReference type="PANTHER" id="PTHR22976:SF2">
    <property type="entry name" value="BIOTIN SYNTHASE, MITOCHONDRIAL"/>
    <property type="match status" value="1"/>
</dbReference>
<dbReference type="Pfam" id="PF06968">
    <property type="entry name" value="BATS"/>
    <property type="match status" value="1"/>
</dbReference>
<dbReference type="Pfam" id="PF04055">
    <property type="entry name" value="Radical_SAM"/>
    <property type="match status" value="1"/>
</dbReference>
<dbReference type="PIRSF" id="PIRSF001619">
    <property type="entry name" value="Biotin_synth"/>
    <property type="match status" value="1"/>
</dbReference>
<dbReference type="SFLD" id="SFLDG01060">
    <property type="entry name" value="BATS_domain_containing"/>
    <property type="match status" value="1"/>
</dbReference>
<dbReference type="SFLD" id="SFLDF00272">
    <property type="entry name" value="biotin_synthase"/>
    <property type="match status" value="1"/>
</dbReference>
<dbReference type="SMART" id="SM00876">
    <property type="entry name" value="BATS"/>
    <property type="match status" value="1"/>
</dbReference>
<dbReference type="SMART" id="SM00729">
    <property type="entry name" value="Elp3"/>
    <property type="match status" value="1"/>
</dbReference>
<dbReference type="SUPFAM" id="SSF102114">
    <property type="entry name" value="Radical SAM enzymes"/>
    <property type="match status" value="1"/>
</dbReference>
<dbReference type="PROSITE" id="PS51918">
    <property type="entry name" value="RADICAL_SAM"/>
    <property type="match status" value="1"/>
</dbReference>
<feature type="chain" id="PRO_0000381361" description="Biotin synthase">
    <location>
        <begin position="1"/>
        <end position="346"/>
    </location>
</feature>
<feature type="domain" description="Radical SAM core" evidence="2">
    <location>
        <begin position="38"/>
        <end position="256"/>
    </location>
</feature>
<feature type="binding site" evidence="1">
    <location>
        <position position="53"/>
    </location>
    <ligand>
        <name>[4Fe-4S] cluster</name>
        <dbReference type="ChEBI" id="CHEBI:49883"/>
        <note>4Fe-4S-S-AdoMet</note>
    </ligand>
</feature>
<feature type="binding site" evidence="1">
    <location>
        <position position="57"/>
    </location>
    <ligand>
        <name>[4Fe-4S] cluster</name>
        <dbReference type="ChEBI" id="CHEBI:49883"/>
        <note>4Fe-4S-S-AdoMet</note>
    </ligand>
</feature>
<feature type="binding site" evidence="1">
    <location>
        <position position="60"/>
    </location>
    <ligand>
        <name>[4Fe-4S] cluster</name>
        <dbReference type="ChEBI" id="CHEBI:49883"/>
        <note>4Fe-4S-S-AdoMet</note>
    </ligand>
</feature>
<feature type="binding site" evidence="1">
    <location>
        <position position="97"/>
    </location>
    <ligand>
        <name>[2Fe-2S] cluster</name>
        <dbReference type="ChEBI" id="CHEBI:190135"/>
    </ligand>
</feature>
<feature type="binding site" evidence="1">
    <location>
        <position position="128"/>
    </location>
    <ligand>
        <name>[2Fe-2S] cluster</name>
        <dbReference type="ChEBI" id="CHEBI:190135"/>
    </ligand>
</feature>
<feature type="binding site" evidence="1">
    <location>
        <position position="188"/>
    </location>
    <ligand>
        <name>[2Fe-2S] cluster</name>
        <dbReference type="ChEBI" id="CHEBI:190135"/>
    </ligand>
</feature>
<feature type="binding site" evidence="1">
    <location>
        <position position="260"/>
    </location>
    <ligand>
        <name>[2Fe-2S] cluster</name>
        <dbReference type="ChEBI" id="CHEBI:190135"/>
    </ligand>
</feature>
<reference key="1">
    <citation type="journal article" date="2009" name="PLoS Genet.">
        <title>Organised genome dynamics in the Escherichia coli species results in highly diverse adaptive paths.</title>
        <authorList>
            <person name="Touchon M."/>
            <person name="Hoede C."/>
            <person name="Tenaillon O."/>
            <person name="Barbe V."/>
            <person name="Baeriswyl S."/>
            <person name="Bidet P."/>
            <person name="Bingen E."/>
            <person name="Bonacorsi S."/>
            <person name="Bouchier C."/>
            <person name="Bouvet O."/>
            <person name="Calteau A."/>
            <person name="Chiapello H."/>
            <person name="Clermont O."/>
            <person name="Cruveiller S."/>
            <person name="Danchin A."/>
            <person name="Diard M."/>
            <person name="Dossat C."/>
            <person name="Karoui M.E."/>
            <person name="Frapy E."/>
            <person name="Garry L."/>
            <person name="Ghigo J.M."/>
            <person name="Gilles A.M."/>
            <person name="Johnson J."/>
            <person name="Le Bouguenec C."/>
            <person name="Lescat M."/>
            <person name="Mangenot S."/>
            <person name="Martinez-Jehanne V."/>
            <person name="Matic I."/>
            <person name="Nassif X."/>
            <person name="Oztas S."/>
            <person name="Petit M.A."/>
            <person name="Pichon C."/>
            <person name="Rouy Z."/>
            <person name="Ruf C.S."/>
            <person name="Schneider D."/>
            <person name="Tourret J."/>
            <person name="Vacherie B."/>
            <person name="Vallenet D."/>
            <person name="Medigue C."/>
            <person name="Rocha E.P.C."/>
            <person name="Denamur E."/>
        </authorList>
    </citation>
    <scope>NUCLEOTIDE SEQUENCE [LARGE SCALE GENOMIC DNA]</scope>
    <source>
        <strain>IAI39 / ExPEC</strain>
    </source>
</reference>
<comment type="function">
    <text evidence="1">Catalyzes the conversion of dethiobiotin (DTB) to biotin by the insertion of a sulfur atom into dethiobiotin via a radical-based mechanism.</text>
</comment>
<comment type="catalytic activity">
    <reaction evidence="1">
        <text>(4R,5S)-dethiobiotin + (sulfur carrier)-SH + 2 reduced [2Fe-2S]-[ferredoxin] + 2 S-adenosyl-L-methionine = (sulfur carrier)-H + biotin + 2 5'-deoxyadenosine + 2 L-methionine + 2 oxidized [2Fe-2S]-[ferredoxin]</text>
        <dbReference type="Rhea" id="RHEA:22060"/>
        <dbReference type="Rhea" id="RHEA-COMP:10000"/>
        <dbReference type="Rhea" id="RHEA-COMP:10001"/>
        <dbReference type="Rhea" id="RHEA-COMP:14737"/>
        <dbReference type="Rhea" id="RHEA-COMP:14739"/>
        <dbReference type="ChEBI" id="CHEBI:17319"/>
        <dbReference type="ChEBI" id="CHEBI:29917"/>
        <dbReference type="ChEBI" id="CHEBI:33737"/>
        <dbReference type="ChEBI" id="CHEBI:33738"/>
        <dbReference type="ChEBI" id="CHEBI:57586"/>
        <dbReference type="ChEBI" id="CHEBI:57844"/>
        <dbReference type="ChEBI" id="CHEBI:59789"/>
        <dbReference type="ChEBI" id="CHEBI:64428"/>
        <dbReference type="ChEBI" id="CHEBI:149473"/>
        <dbReference type="EC" id="2.8.1.6"/>
    </reaction>
</comment>
<comment type="cofactor">
    <cofactor evidence="1">
        <name>[4Fe-4S] cluster</name>
        <dbReference type="ChEBI" id="CHEBI:49883"/>
    </cofactor>
    <text evidence="1">Binds 1 [4Fe-4S] cluster. The cluster is coordinated with 3 cysteines and an exchangeable S-adenosyl-L-methionine.</text>
</comment>
<comment type="cofactor">
    <cofactor evidence="1">
        <name>[2Fe-2S] cluster</name>
        <dbReference type="ChEBI" id="CHEBI:190135"/>
    </cofactor>
    <text evidence="1">Binds 1 [2Fe-2S] cluster. The cluster is coordinated with 3 cysteines and 1 arginine.</text>
</comment>
<comment type="pathway">
    <text evidence="1">Cofactor biosynthesis; biotin biosynthesis; biotin from 7,8-diaminononanoate: step 2/2.</text>
</comment>
<comment type="subunit">
    <text evidence="1">Homodimer.</text>
</comment>
<comment type="similarity">
    <text evidence="1">Belongs to the radical SAM superfamily. Biotin synthase family.</text>
</comment>
<name>BIOB_ECO7I</name>
<sequence length="346" mass="38648">MAHRPRWTLSQVTELFEKPLLDLLFEAQQVHRQHFDPRQVQVSTLLSIKTGACPEDCKYCPQSSRYKTGLEAERLMEVEQVLESARKAKAAGSTRFCMGAAWKNPHERDMPYLEQMVQGVKAMGLEACMTLGTLSESQAQRLANAGLDYYNHNLDTSPEFYGNIITTRTYQERLDTLEKVRDAGIKVCSGGIVGLGETVKDRAGLLLQLANLPTPPESVPINMLVKVKGTPLADNDDVDAFDFIRTIAVARIMMPTSYVRLSAGREQMNEQTQAMCFMAGANSIFYGCKLLTTPNPEEDKDLQLFRKLGLNPQQTAVLAGDNEQQQRLEQALMTPDTDEYYNAAAL</sequence>
<protein>
    <recommendedName>
        <fullName evidence="1">Biotin synthase</fullName>
        <ecNumber evidence="1">2.8.1.6</ecNumber>
    </recommendedName>
</protein>
<evidence type="ECO:0000255" key="1">
    <source>
        <dbReference type="HAMAP-Rule" id="MF_01694"/>
    </source>
</evidence>
<evidence type="ECO:0000255" key="2">
    <source>
        <dbReference type="PROSITE-ProRule" id="PRU01266"/>
    </source>
</evidence>
<proteinExistence type="inferred from homology"/>
<accession>B7NNK5</accession>
<gene>
    <name evidence="1" type="primary">bioB</name>
    <name type="ordered locus">ECIAI39_0751</name>
</gene>
<keyword id="KW-0001">2Fe-2S</keyword>
<keyword id="KW-0004">4Fe-4S</keyword>
<keyword id="KW-0093">Biotin biosynthesis</keyword>
<keyword id="KW-0408">Iron</keyword>
<keyword id="KW-0411">Iron-sulfur</keyword>
<keyword id="KW-0479">Metal-binding</keyword>
<keyword id="KW-0949">S-adenosyl-L-methionine</keyword>
<keyword id="KW-0808">Transferase</keyword>
<organism>
    <name type="scientific">Escherichia coli O7:K1 (strain IAI39 / ExPEC)</name>
    <dbReference type="NCBI Taxonomy" id="585057"/>
    <lineage>
        <taxon>Bacteria</taxon>
        <taxon>Pseudomonadati</taxon>
        <taxon>Pseudomonadota</taxon>
        <taxon>Gammaproteobacteria</taxon>
        <taxon>Enterobacterales</taxon>
        <taxon>Enterobacteriaceae</taxon>
        <taxon>Escherichia</taxon>
    </lineage>
</organism>